<evidence type="ECO:0000250" key="1">
    <source>
        <dbReference type="UniProtKB" id="D4A2B7"/>
    </source>
</evidence>
<evidence type="ECO:0000250" key="2">
    <source>
        <dbReference type="UniProtKB" id="P32794"/>
    </source>
</evidence>
<evidence type="ECO:0000250" key="3">
    <source>
        <dbReference type="UniProtKB" id="Q9BVQ7"/>
    </source>
</evidence>
<evidence type="ECO:0000255" key="4"/>
<evidence type="ECO:0000269" key="5">
    <source>
    </source>
</evidence>
<evidence type="ECO:0000303" key="6">
    <source>
    </source>
</evidence>
<evidence type="ECO:0000305" key="7"/>
<evidence type="ECO:0000312" key="8">
    <source>
        <dbReference type="MGI" id="MGI:3036261"/>
    </source>
</evidence>
<accession>A0A7N9VSG0</accession>
<comment type="function">
    <text evidence="3">ATP-dependent chaperone part of the 55LCC heterohexameric ATPase complex which is chromatin-associated and promotes replisome proteostasis to maintain replication fork progression and genome stability. Required for replication fork progression, sister chromatid cohesion, and chromosome stability. The ATPase activity is specifically enhanced by replication fork DNA and is coupled to cysteine protease-dependent cleavage of replisome substrates in response to replication fork damage. Uses ATPase activity to process replisome substrates in S-phase, facilitating their proteolytic turnover from chromatin to ensure DNA replication and mitotic fidelity. Plays an essential role in the cytoplasmic maturation steps of pre-60S ribosomal particles by promoting the release of shuttling protein RSL24D1/RLP24 from the pre-ribosomal particles.</text>
</comment>
<comment type="catalytic activity">
    <reaction evidence="2">
        <text>ATP + H2O = ADP + phosphate + H(+)</text>
        <dbReference type="Rhea" id="RHEA:13065"/>
        <dbReference type="ChEBI" id="CHEBI:15377"/>
        <dbReference type="ChEBI" id="CHEBI:15378"/>
        <dbReference type="ChEBI" id="CHEBI:30616"/>
        <dbReference type="ChEBI" id="CHEBI:43474"/>
        <dbReference type="ChEBI" id="CHEBI:456216"/>
        <dbReference type="EC" id="3.6.4.10"/>
    </reaction>
</comment>
<comment type="activity regulation">
    <text evidence="3">In the context of 55LCC heterohexameric ATPase complex, the ATPase activity is stimulated by DNA binding and inhibited in presence of RNA.</text>
</comment>
<comment type="subunit">
    <text evidence="3">Part of the 55LCC heterohexameric ATPase complex composed at least of AIRIM, AFG2A, AFG2B and CINP. Associates with pre-60S ribosomal particles.</text>
</comment>
<comment type="subcellular location">
    <subcellularLocation>
        <location evidence="3">Cytoplasm</location>
    </subcellularLocation>
    <subcellularLocation>
        <location evidence="3">Cytoplasm</location>
        <location evidence="3">Cytoskeleton</location>
        <location evidence="3">Spindle</location>
    </subcellularLocation>
    <subcellularLocation>
        <location evidence="1">Nucleus</location>
    </subcellularLocation>
</comment>
<comment type="tissue specificity">
    <text evidence="5">In adult ear, expressed at low levels in neurosensory hair cells (inner and outer) and supporting cells (pillar and Deiter cells).</text>
</comment>
<comment type="similarity">
    <text evidence="7">Belongs to the AAA ATPase family. AFG2 subfamily.</text>
</comment>
<gene>
    <name type="primary">Afg2b</name>
    <name evidence="6 8" type="synonym">Spata5l1</name>
</gene>
<protein>
    <recommendedName>
        <fullName>ATPase family gene 2 protein homolog B</fullName>
        <ecNumber evidence="2">3.6.4.10</ecNumber>
    </recommendedName>
    <alternativeName>
        <fullName>AFG2 AAA ATPase homolog B</fullName>
    </alternativeName>
    <alternativeName>
        <fullName evidence="7">Ribosome biogenesis protein SPATA5L1</fullName>
    </alternativeName>
    <alternativeName>
        <fullName>Spermatogenesis-associated protein 5-like protein 1</fullName>
    </alternativeName>
</protein>
<proteinExistence type="evidence at transcript level"/>
<name>AFG2B_MOUSE</name>
<feature type="chain" id="PRO_0000456283" description="ATPase family gene 2 protein homolog B">
    <location>
        <begin position="1"/>
        <end position="747"/>
    </location>
</feature>
<feature type="binding site" evidence="4">
    <location>
        <begin position="234"/>
        <end position="241"/>
    </location>
    <ligand>
        <name>ATP</name>
        <dbReference type="ChEBI" id="CHEBI:30616"/>
        <label>1</label>
    </ligand>
</feature>
<feature type="binding site" evidence="4">
    <location>
        <begin position="500"/>
        <end position="507"/>
    </location>
    <ligand>
        <name>ATP</name>
        <dbReference type="ChEBI" id="CHEBI:30616"/>
        <label>2</label>
    </ligand>
</feature>
<feature type="modified residue" description="N-acetylmethionine" evidence="3">
    <location>
        <position position="1"/>
    </location>
</feature>
<sequence>MAPDSGPFPDGQLLKLLPVDPRDRDTQRCRLGPAAFRSLGARLGSPLRISLPAGGCCLCTAWPRRDRVDGFVQLDPQCASPGARVATGRIGMDCLQPVPCPPLRRLEVWPVLRPQAGAPSSAAVLEVVHELLRNRPVSRGHVVTTPPGVPGPVAALHVMGGTPDPEPGGWVTPHTRITLSDKPPPQVEPPGEVTLGGLSETADSLRELLRLPLRYPLALAALGLAVPRGVLLAGPPGVGKTQLVRAVARETGAELLAVSAPALQGSRPGETEENVRRIFQRAQELASRGPSLLFLDEVDALCPRRGGPHRAPESRVVAQVLTLLDGIHRDREFVVVGATNRPDELDPALRRPGRFDREVVIGTPTLKQREAILQVITSKMPISSHIDLGLLAEMTVGYVGADLTALCREAAMCALLKNEKNQDSPKIEETDFLEAFKKIQPSSFRSSTGLMDIKPVGWEQIGGLEDVKLKLKQCVEWPLKFPQEFARMGLTQPKGLLLYGPPGCAKTTLVRALATGCHCSFVSVCGADLFSPFVGDSEKVLSQVFRQARANTPALVFLDEIDSVLGSRSVGTSGCDARERVLSVLLNELDGVGVRTVERRGSKASQQECQEILSRSVMIVVATNRPDVLDDALLRPGRLDKIIYVPPPDQEGRLSILKVCTNNMPVGPDVSLENLAAETCFFSGADLRNLCKEAALFALQENGLEATTVRQEHFTEALKTVKPSLTLKELTFYENLFKKGLSNLEDD</sequence>
<keyword id="KW-0007">Acetylation</keyword>
<keyword id="KW-0067">ATP-binding</keyword>
<keyword id="KW-0963">Cytoplasm</keyword>
<keyword id="KW-0206">Cytoskeleton</keyword>
<keyword id="KW-0378">Hydrolase</keyword>
<keyword id="KW-0547">Nucleotide-binding</keyword>
<keyword id="KW-0539">Nucleus</keyword>
<keyword id="KW-1185">Reference proteome</keyword>
<keyword id="KW-0677">Repeat</keyword>
<keyword id="KW-0690">Ribosome biogenesis</keyword>
<organism>
    <name type="scientific">Mus musculus</name>
    <name type="common">Mouse</name>
    <dbReference type="NCBI Taxonomy" id="10090"/>
    <lineage>
        <taxon>Eukaryota</taxon>
        <taxon>Metazoa</taxon>
        <taxon>Chordata</taxon>
        <taxon>Craniata</taxon>
        <taxon>Vertebrata</taxon>
        <taxon>Euteleostomi</taxon>
        <taxon>Mammalia</taxon>
        <taxon>Eutheria</taxon>
        <taxon>Euarchontoglires</taxon>
        <taxon>Glires</taxon>
        <taxon>Rodentia</taxon>
        <taxon>Myomorpha</taxon>
        <taxon>Muroidea</taxon>
        <taxon>Muridae</taxon>
        <taxon>Murinae</taxon>
        <taxon>Mus</taxon>
        <taxon>Mus</taxon>
    </lineage>
</organism>
<reference key="1">
    <citation type="journal article" date="2009" name="PLoS Biol.">
        <title>Lineage-specific biology revealed by a finished genome assembly of the mouse.</title>
        <authorList>
            <person name="Church D.M."/>
            <person name="Goodstadt L."/>
            <person name="Hillier L.W."/>
            <person name="Zody M.C."/>
            <person name="Goldstein S."/>
            <person name="She X."/>
            <person name="Bult C.J."/>
            <person name="Agarwala R."/>
            <person name="Cherry J.L."/>
            <person name="DiCuccio M."/>
            <person name="Hlavina W."/>
            <person name="Kapustin Y."/>
            <person name="Meric P."/>
            <person name="Maglott D."/>
            <person name="Birtle Z."/>
            <person name="Marques A.C."/>
            <person name="Graves T."/>
            <person name="Zhou S."/>
            <person name="Teague B."/>
            <person name="Potamousis K."/>
            <person name="Churas C."/>
            <person name="Place M."/>
            <person name="Herschleb J."/>
            <person name="Runnheim R."/>
            <person name="Forrest D."/>
            <person name="Amos-Landgraf J."/>
            <person name="Schwartz D.C."/>
            <person name="Cheng Z."/>
            <person name="Lindblad-Toh K."/>
            <person name="Eichler E.E."/>
            <person name="Ponting C.P."/>
        </authorList>
    </citation>
    <scope>NUCLEOTIDE SEQUENCE [LARGE SCALE GENOMIC DNA]</scope>
    <source>
        <strain>C57BL/6J</strain>
    </source>
</reference>
<reference key="2">
    <citation type="journal article" date="2021" name="Am. J. Hum. Genet.">
        <title>Bi-allelic variants in SPATA5L1 lead to intellectual disability, spastic-dystonic cerebral palsy, epilepsy, and hearing loss.</title>
        <authorList>
            <person name="Richard E.M."/>
            <person name="Bakhtiari S."/>
            <person name="Marsh A.P.L."/>
            <person name="Kaiyrzhanov R."/>
            <person name="Wagner M."/>
            <person name="Shetty S."/>
            <person name="Pagnozzi A."/>
            <person name="Nordlie S.M."/>
            <person name="Guida B.S."/>
            <person name="Cornejo P."/>
            <person name="Magee H."/>
            <person name="Liu J."/>
            <person name="Norton B.Y."/>
            <person name="Webster R.I."/>
            <person name="Worgan L."/>
            <person name="Hakonarson H."/>
            <person name="Li J."/>
            <person name="Guo Y."/>
            <person name="Jain M."/>
            <person name="Blesson A."/>
            <person name="Rodan L.H."/>
            <person name="Abbott M.A."/>
            <person name="Comi A."/>
            <person name="Cohen J.S."/>
            <person name="Alhaddad B."/>
            <person name="Meitinger T."/>
            <person name="Lenz D."/>
            <person name="Ziegler A."/>
            <person name="Kotzaeridou U."/>
            <person name="Brunet T."/>
            <person name="Chassevent A."/>
            <person name="Smith-Hicks C."/>
            <person name="Ekstein J."/>
            <person name="Weiden T."/>
            <person name="Hahn A."/>
            <person name="Zharkinbekova N."/>
            <person name="Turnpenny P."/>
            <person name="Tucci A."/>
            <person name="Yelton M."/>
            <person name="Horvath R."/>
            <person name="Gungor S."/>
            <person name="Hiz S."/>
            <person name="Oktay Y."/>
            <person name="Lochmuller H."/>
            <person name="Zollino M."/>
            <person name="Morleo M."/>
            <person name="Marangi G."/>
            <person name="Nigro V."/>
            <person name="Torella A."/>
            <person name="Pinelli M."/>
            <person name="Amenta S."/>
            <person name="Husain R.A."/>
            <person name="Grossmann B."/>
            <person name="Rapp M."/>
            <person name="Steen C."/>
            <person name="Marquardt I."/>
            <person name="Grimmel M."/>
            <person name="Grasshoff U."/>
            <person name="Korenke G.C."/>
            <person name="Owczarek-Lipska M."/>
            <person name="Neidhardt J."/>
            <person name="Radio F.C."/>
            <person name="Mancini C."/>
            <person name="Claps Sepulveda D.J."/>
            <person name="McWalter K."/>
            <person name="Begtrup A."/>
            <person name="Crunk A."/>
            <person name="Guillen Sacoto M.J."/>
            <person name="Person R."/>
            <person name="Schnur R.E."/>
            <person name="Mancardi M.M."/>
            <person name="Kreuder F."/>
            <person name="Striano P."/>
            <person name="Zara F."/>
            <person name="Chung W.K."/>
            <person name="Marks W.A."/>
            <person name="van Eyk C.L."/>
            <person name="Webber D.L."/>
            <person name="Corbett M.A."/>
            <person name="Harper K."/>
            <person name="Berry J.G."/>
            <person name="MacLennan A.H."/>
            <person name="Gecz J."/>
            <person name="Tartaglia M."/>
            <person name="Salpietro V."/>
            <person name="Christodoulou J."/>
            <person name="Kaslin J."/>
            <person name="Padilla-Lopez S."/>
            <person name="Bilguvar K."/>
            <person name="Munchau A."/>
            <person name="Ahmed Z.M."/>
            <person name="Hufnagel R.B."/>
            <person name="Fahey M.C."/>
            <person name="Maroofian R."/>
            <person name="Houlden H."/>
            <person name="Sticht H."/>
            <person name="Mane S.M."/>
            <person name="Rad A."/>
            <person name="Vona B."/>
            <person name="Jin S.C."/>
            <person name="Haack T.B."/>
            <person name="Makowski C."/>
            <person name="Hirsch Y."/>
            <person name="Riazuddin S."/>
            <person name="Kruer M.C."/>
        </authorList>
    </citation>
    <scope>TISSUE SPECIFICITY</scope>
</reference>
<dbReference type="EC" id="3.6.4.10" evidence="2"/>
<dbReference type="RefSeq" id="NP_001028428.2">
    <property type="nucleotide sequence ID" value="NM_001033256.5"/>
</dbReference>
<dbReference type="SMR" id="A0A7N9VSG0"/>
<dbReference type="FunCoup" id="A0A7N9VSG0">
    <property type="interactions" value="719"/>
</dbReference>
<dbReference type="PhosphoSitePlus" id="A0A7N9VSG0"/>
<dbReference type="Ensembl" id="ENSMUST00000239506.1">
    <property type="protein sequence ID" value="ENSMUSP00000159384.2"/>
    <property type="gene ID" value="ENSMUSG00000118663.1"/>
</dbReference>
<dbReference type="GeneID" id="214616"/>
<dbReference type="KEGG" id="mmu:214616"/>
<dbReference type="AGR" id="MGI:3036261"/>
<dbReference type="CTD" id="79029"/>
<dbReference type="MGI" id="MGI:3036261">
    <property type="gene designation" value="Afg2b"/>
</dbReference>
<dbReference type="GeneTree" id="ENSGT00940000160700"/>
<dbReference type="InParanoid" id="A0A7N9VSG0"/>
<dbReference type="OMA" id="DRHIYVA"/>
<dbReference type="OrthoDB" id="27435at2759"/>
<dbReference type="PRO" id="PR:A0A7N9VSG0"/>
<dbReference type="Proteomes" id="UP000000589">
    <property type="component" value="Chromosome 2"/>
</dbReference>
<dbReference type="GO" id="GO:0005737">
    <property type="term" value="C:cytoplasm"/>
    <property type="evidence" value="ECO:0007669"/>
    <property type="project" value="UniProtKB-SubCell"/>
</dbReference>
<dbReference type="GO" id="GO:0005634">
    <property type="term" value="C:nucleus"/>
    <property type="evidence" value="ECO:0007669"/>
    <property type="project" value="UniProtKB-SubCell"/>
</dbReference>
<dbReference type="GO" id="GO:0005819">
    <property type="term" value="C:spindle"/>
    <property type="evidence" value="ECO:0007669"/>
    <property type="project" value="UniProtKB-SubCell"/>
</dbReference>
<dbReference type="GO" id="GO:0005524">
    <property type="term" value="F:ATP binding"/>
    <property type="evidence" value="ECO:0007669"/>
    <property type="project" value="UniProtKB-KW"/>
</dbReference>
<dbReference type="GO" id="GO:0016887">
    <property type="term" value="F:ATP hydrolysis activity"/>
    <property type="evidence" value="ECO:0007669"/>
    <property type="project" value="InterPro"/>
</dbReference>
<dbReference type="GO" id="GO:0042802">
    <property type="term" value="F:identical protein binding"/>
    <property type="evidence" value="ECO:0007669"/>
    <property type="project" value="Ensembl"/>
</dbReference>
<dbReference type="GO" id="GO:1990275">
    <property type="term" value="F:preribosome binding"/>
    <property type="evidence" value="ECO:0000250"/>
    <property type="project" value="UniProtKB"/>
</dbReference>
<dbReference type="GO" id="GO:0042273">
    <property type="term" value="P:ribosomal large subunit biogenesis"/>
    <property type="evidence" value="ECO:0000250"/>
    <property type="project" value="UniProtKB"/>
</dbReference>
<dbReference type="FunFam" id="1.10.8.60:FF:000075">
    <property type="entry name" value="Spermatogenesis-associated protein 5-like protein 1"/>
    <property type="match status" value="1"/>
</dbReference>
<dbReference type="FunFam" id="3.40.50.300:FF:001081">
    <property type="entry name" value="Spermatogenesis-associated protein 5-like protein 1"/>
    <property type="match status" value="1"/>
</dbReference>
<dbReference type="FunFam" id="1.10.8.60:FF:000038">
    <property type="entry name" value="spermatogenesis-associated protein 5-like protein 1"/>
    <property type="match status" value="1"/>
</dbReference>
<dbReference type="FunFam" id="3.40.50.300:FF:001161">
    <property type="entry name" value="spermatogenesis-associated protein 5-like protein 1"/>
    <property type="match status" value="1"/>
</dbReference>
<dbReference type="Gene3D" id="1.10.8.60">
    <property type="match status" value="2"/>
</dbReference>
<dbReference type="Gene3D" id="3.40.50.300">
    <property type="entry name" value="P-loop containing nucleotide triphosphate hydrolases"/>
    <property type="match status" value="2"/>
</dbReference>
<dbReference type="InterPro" id="IPR003593">
    <property type="entry name" value="AAA+_ATPase"/>
</dbReference>
<dbReference type="InterPro" id="IPR050168">
    <property type="entry name" value="AAA_ATPase_domain"/>
</dbReference>
<dbReference type="InterPro" id="IPR041569">
    <property type="entry name" value="AAA_lid_3"/>
</dbReference>
<dbReference type="InterPro" id="IPR003959">
    <property type="entry name" value="ATPase_AAA_core"/>
</dbReference>
<dbReference type="InterPro" id="IPR003960">
    <property type="entry name" value="ATPase_AAA_CS"/>
</dbReference>
<dbReference type="InterPro" id="IPR027417">
    <property type="entry name" value="P-loop_NTPase"/>
</dbReference>
<dbReference type="PANTHER" id="PTHR23077">
    <property type="entry name" value="AAA-FAMILY ATPASE"/>
    <property type="match status" value="1"/>
</dbReference>
<dbReference type="PANTHER" id="PTHR23077:SF194">
    <property type="entry name" value="ATPASE FAMILY GENE 2 PROTEIN HOMOLOG B"/>
    <property type="match status" value="1"/>
</dbReference>
<dbReference type="Pfam" id="PF00004">
    <property type="entry name" value="AAA"/>
    <property type="match status" value="2"/>
</dbReference>
<dbReference type="Pfam" id="PF17862">
    <property type="entry name" value="AAA_lid_3"/>
    <property type="match status" value="2"/>
</dbReference>
<dbReference type="SMART" id="SM00382">
    <property type="entry name" value="AAA"/>
    <property type="match status" value="2"/>
</dbReference>
<dbReference type="SUPFAM" id="SSF52540">
    <property type="entry name" value="P-loop containing nucleoside triphosphate hydrolases"/>
    <property type="match status" value="2"/>
</dbReference>
<dbReference type="PROSITE" id="PS00674">
    <property type="entry name" value="AAA"/>
    <property type="match status" value="1"/>
</dbReference>